<organism>
    <name type="scientific">Escherichia coli (strain 55989 / EAEC)</name>
    <dbReference type="NCBI Taxonomy" id="585055"/>
    <lineage>
        <taxon>Bacteria</taxon>
        <taxon>Pseudomonadati</taxon>
        <taxon>Pseudomonadota</taxon>
        <taxon>Gammaproteobacteria</taxon>
        <taxon>Enterobacterales</taxon>
        <taxon>Enterobacteriaceae</taxon>
        <taxon>Escherichia</taxon>
    </lineage>
</organism>
<comment type="function">
    <text evidence="1">Catalyzes the condensation of the acetyl group of acetyl-CoA with 3-methyl-2-oxobutanoate (2-ketoisovalerate) to form 3-carboxy-3-hydroxy-4-methylpentanoate (2-isopropylmalate).</text>
</comment>
<comment type="catalytic activity">
    <reaction evidence="1">
        <text>3-methyl-2-oxobutanoate + acetyl-CoA + H2O = (2S)-2-isopropylmalate + CoA + H(+)</text>
        <dbReference type="Rhea" id="RHEA:21524"/>
        <dbReference type="ChEBI" id="CHEBI:1178"/>
        <dbReference type="ChEBI" id="CHEBI:11851"/>
        <dbReference type="ChEBI" id="CHEBI:15377"/>
        <dbReference type="ChEBI" id="CHEBI:15378"/>
        <dbReference type="ChEBI" id="CHEBI:57287"/>
        <dbReference type="ChEBI" id="CHEBI:57288"/>
        <dbReference type="EC" id="2.3.3.13"/>
    </reaction>
</comment>
<comment type="cofactor">
    <cofactor evidence="1">
        <name>Mn(2+)</name>
        <dbReference type="ChEBI" id="CHEBI:29035"/>
    </cofactor>
</comment>
<comment type="pathway">
    <text evidence="1">Amino-acid biosynthesis; L-leucine biosynthesis; L-leucine from 3-methyl-2-oxobutanoate: step 1/4.</text>
</comment>
<comment type="subunit">
    <text evidence="1">Homodimer.</text>
</comment>
<comment type="subcellular location">
    <subcellularLocation>
        <location evidence="1">Cytoplasm</location>
    </subcellularLocation>
</comment>
<comment type="similarity">
    <text evidence="1">Belongs to the alpha-IPM synthase/homocitrate synthase family. LeuA type 1 subfamily.</text>
</comment>
<reference key="1">
    <citation type="journal article" date="2009" name="PLoS Genet.">
        <title>Organised genome dynamics in the Escherichia coli species results in highly diverse adaptive paths.</title>
        <authorList>
            <person name="Touchon M."/>
            <person name="Hoede C."/>
            <person name="Tenaillon O."/>
            <person name="Barbe V."/>
            <person name="Baeriswyl S."/>
            <person name="Bidet P."/>
            <person name="Bingen E."/>
            <person name="Bonacorsi S."/>
            <person name="Bouchier C."/>
            <person name="Bouvet O."/>
            <person name="Calteau A."/>
            <person name="Chiapello H."/>
            <person name="Clermont O."/>
            <person name="Cruveiller S."/>
            <person name="Danchin A."/>
            <person name="Diard M."/>
            <person name="Dossat C."/>
            <person name="Karoui M.E."/>
            <person name="Frapy E."/>
            <person name="Garry L."/>
            <person name="Ghigo J.M."/>
            <person name="Gilles A.M."/>
            <person name="Johnson J."/>
            <person name="Le Bouguenec C."/>
            <person name="Lescat M."/>
            <person name="Mangenot S."/>
            <person name="Martinez-Jehanne V."/>
            <person name="Matic I."/>
            <person name="Nassif X."/>
            <person name="Oztas S."/>
            <person name="Petit M.A."/>
            <person name="Pichon C."/>
            <person name="Rouy Z."/>
            <person name="Ruf C.S."/>
            <person name="Schneider D."/>
            <person name="Tourret J."/>
            <person name="Vacherie B."/>
            <person name="Vallenet D."/>
            <person name="Medigue C."/>
            <person name="Rocha E.P.C."/>
            <person name="Denamur E."/>
        </authorList>
    </citation>
    <scope>NUCLEOTIDE SEQUENCE [LARGE SCALE GENOMIC DNA]</scope>
    <source>
        <strain>55989 / EAEC</strain>
    </source>
</reference>
<name>LEU1_ECO55</name>
<accession>B7LFU5</accession>
<proteinExistence type="inferred from homology"/>
<gene>
    <name evidence="1" type="primary">leuA</name>
    <name type="ordered locus">EC55989_0072</name>
</gene>
<dbReference type="EC" id="2.3.3.13" evidence="1"/>
<dbReference type="EMBL" id="CU928145">
    <property type="protein sequence ID" value="CAU95959.1"/>
    <property type="molecule type" value="Genomic_DNA"/>
</dbReference>
<dbReference type="RefSeq" id="WP_000082846.1">
    <property type="nucleotide sequence ID" value="NC_011748.1"/>
</dbReference>
<dbReference type="SMR" id="B7LFU5"/>
<dbReference type="GeneID" id="75202109"/>
<dbReference type="KEGG" id="eck:EC55989_0072"/>
<dbReference type="HOGENOM" id="CLU_022158_0_1_6"/>
<dbReference type="UniPathway" id="UPA00048">
    <property type="reaction ID" value="UER00070"/>
</dbReference>
<dbReference type="Proteomes" id="UP000000746">
    <property type="component" value="Chromosome"/>
</dbReference>
<dbReference type="GO" id="GO:0005829">
    <property type="term" value="C:cytosol"/>
    <property type="evidence" value="ECO:0007669"/>
    <property type="project" value="TreeGrafter"/>
</dbReference>
<dbReference type="GO" id="GO:0003852">
    <property type="term" value="F:2-isopropylmalate synthase activity"/>
    <property type="evidence" value="ECO:0007669"/>
    <property type="project" value="UniProtKB-UniRule"/>
</dbReference>
<dbReference type="GO" id="GO:0003985">
    <property type="term" value="F:acetyl-CoA C-acetyltransferase activity"/>
    <property type="evidence" value="ECO:0007669"/>
    <property type="project" value="UniProtKB-UniRule"/>
</dbReference>
<dbReference type="GO" id="GO:0030145">
    <property type="term" value="F:manganese ion binding"/>
    <property type="evidence" value="ECO:0007669"/>
    <property type="project" value="UniProtKB-UniRule"/>
</dbReference>
<dbReference type="GO" id="GO:0009098">
    <property type="term" value="P:L-leucine biosynthetic process"/>
    <property type="evidence" value="ECO:0007669"/>
    <property type="project" value="UniProtKB-UniRule"/>
</dbReference>
<dbReference type="CDD" id="cd07940">
    <property type="entry name" value="DRE_TIM_IPMS"/>
    <property type="match status" value="1"/>
</dbReference>
<dbReference type="FunFam" id="1.10.238.260:FF:000001">
    <property type="entry name" value="2-isopropylmalate synthase"/>
    <property type="match status" value="1"/>
</dbReference>
<dbReference type="FunFam" id="3.20.20.70:FF:000010">
    <property type="entry name" value="2-isopropylmalate synthase"/>
    <property type="match status" value="1"/>
</dbReference>
<dbReference type="FunFam" id="3.30.160.270:FF:000001">
    <property type="entry name" value="2-isopropylmalate synthase"/>
    <property type="match status" value="1"/>
</dbReference>
<dbReference type="Gene3D" id="1.10.238.260">
    <property type="match status" value="1"/>
</dbReference>
<dbReference type="Gene3D" id="3.30.160.270">
    <property type="match status" value="1"/>
</dbReference>
<dbReference type="Gene3D" id="3.20.20.70">
    <property type="entry name" value="Aldolase class I"/>
    <property type="match status" value="1"/>
</dbReference>
<dbReference type="HAMAP" id="MF_01025">
    <property type="entry name" value="LeuA_type1"/>
    <property type="match status" value="1"/>
</dbReference>
<dbReference type="InterPro" id="IPR050073">
    <property type="entry name" value="2-IPM_HCS-like"/>
</dbReference>
<dbReference type="InterPro" id="IPR013709">
    <property type="entry name" value="2-isopropylmalate_synth_dimer"/>
</dbReference>
<dbReference type="InterPro" id="IPR002034">
    <property type="entry name" value="AIPM/Hcit_synth_CS"/>
</dbReference>
<dbReference type="InterPro" id="IPR013785">
    <property type="entry name" value="Aldolase_TIM"/>
</dbReference>
<dbReference type="InterPro" id="IPR054691">
    <property type="entry name" value="LeuA/HCS_post-cat"/>
</dbReference>
<dbReference type="InterPro" id="IPR036230">
    <property type="entry name" value="LeuA_allosteric_dom_sf"/>
</dbReference>
<dbReference type="InterPro" id="IPR005671">
    <property type="entry name" value="LeuA_bact_synth"/>
</dbReference>
<dbReference type="InterPro" id="IPR000891">
    <property type="entry name" value="PYR_CT"/>
</dbReference>
<dbReference type="NCBIfam" id="TIGR00973">
    <property type="entry name" value="leuA_bact"/>
    <property type="match status" value="1"/>
</dbReference>
<dbReference type="NCBIfam" id="NF002084">
    <property type="entry name" value="PRK00915.1-1"/>
    <property type="match status" value="1"/>
</dbReference>
<dbReference type="NCBIfam" id="NF002086">
    <property type="entry name" value="PRK00915.1-3"/>
    <property type="match status" value="1"/>
</dbReference>
<dbReference type="PANTHER" id="PTHR10277:SF9">
    <property type="entry name" value="2-ISOPROPYLMALATE SYNTHASE 1, CHLOROPLASTIC-RELATED"/>
    <property type="match status" value="1"/>
</dbReference>
<dbReference type="PANTHER" id="PTHR10277">
    <property type="entry name" value="HOMOCITRATE SYNTHASE-RELATED"/>
    <property type="match status" value="1"/>
</dbReference>
<dbReference type="Pfam" id="PF22617">
    <property type="entry name" value="HCS_D2"/>
    <property type="match status" value="1"/>
</dbReference>
<dbReference type="Pfam" id="PF00682">
    <property type="entry name" value="HMGL-like"/>
    <property type="match status" value="1"/>
</dbReference>
<dbReference type="Pfam" id="PF08502">
    <property type="entry name" value="LeuA_dimer"/>
    <property type="match status" value="1"/>
</dbReference>
<dbReference type="SMART" id="SM00917">
    <property type="entry name" value="LeuA_dimer"/>
    <property type="match status" value="1"/>
</dbReference>
<dbReference type="SUPFAM" id="SSF110921">
    <property type="entry name" value="2-isopropylmalate synthase LeuA, allosteric (dimerisation) domain"/>
    <property type="match status" value="1"/>
</dbReference>
<dbReference type="SUPFAM" id="SSF51569">
    <property type="entry name" value="Aldolase"/>
    <property type="match status" value="1"/>
</dbReference>
<dbReference type="PROSITE" id="PS00815">
    <property type="entry name" value="AIPM_HOMOCIT_SYNTH_1"/>
    <property type="match status" value="1"/>
</dbReference>
<dbReference type="PROSITE" id="PS00816">
    <property type="entry name" value="AIPM_HOMOCIT_SYNTH_2"/>
    <property type="match status" value="1"/>
</dbReference>
<dbReference type="PROSITE" id="PS50991">
    <property type="entry name" value="PYR_CT"/>
    <property type="match status" value="1"/>
</dbReference>
<protein>
    <recommendedName>
        <fullName evidence="1">2-isopropylmalate synthase</fullName>
        <ecNumber evidence="1">2.3.3.13</ecNumber>
    </recommendedName>
    <alternativeName>
        <fullName evidence="1">Alpha-IPM synthase</fullName>
    </alternativeName>
    <alternativeName>
        <fullName evidence="1">Alpha-isopropylmalate synthase</fullName>
    </alternativeName>
</protein>
<keyword id="KW-0028">Amino-acid biosynthesis</keyword>
<keyword id="KW-0100">Branched-chain amino acid biosynthesis</keyword>
<keyword id="KW-0963">Cytoplasm</keyword>
<keyword id="KW-0432">Leucine biosynthesis</keyword>
<keyword id="KW-0464">Manganese</keyword>
<keyword id="KW-0479">Metal-binding</keyword>
<keyword id="KW-1185">Reference proteome</keyword>
<keyword id="KW-0808">Transferase</keyword>
<feature type="chain" id="PRO_1000149185" description="2-isopropylmalate synthase">
    <location>
        <begin position="1"/>
        <end position="523"/>
    </location>
</feature>
<feature type="domain" description="Pyruvate carboxyltransferase" evidence="1">
    <location>
        <begin position="5"/>
        <end position="267"/>
    </location>
</feature>
<feature type="region of interest" description="Regulatory domain" evidence="1">
    <location>
        <begin position="392"/>
        <end position="523"/>
    </location>
</feature>
<feature type="binding site" evidence="1">
    <location>
        <position position="14"/>
    </location>
    <ligand>
        <name>Mn(2+)</name>
        <dbReference type="ChEBI" id="CHEBI:29035"/>
    </ligand>
</feature>
<feature type="binding site" evidence="1">
    <location>
        <position position="202"/>
    </location>
    <ligand>
        <name>Mn(2+)</name>
        <dbReference type="ChEBI" id="CHEBI:29035"/>
    </ligand>
</feature>
<feature type="binding site" evidence="1">
    <location>
        <position position="204"/>
    </location>
    <ligand>
        <name>Mn(2+)</name>
        <dbReference type="ChEBI" id="CHEBI:29035"/>
    </ligand>
</feature>
<feature type="binding site" evidence="1">
    <location>
        <position position="238"/>
    </location>
    <ligand>
        <name>Mn(2+)</name>
        <dbReference type="ChEBI" id="CHEBI:29035"/>
    </ligand>
</feature>
<sequence>MSQQVIIFDTTLRDGEQALQASLSVKEKLQIALALERMGVDVMEVGFPVSSPGDFESVQTIARQVKNSRVCALARCVEKDIDVAAESLKVAEAFRIHTFIATSPMHIATKLRSTLDEVIERAIYMVKRARNYTDDVEFSCEDAGRTPIADLARVVEAAINAGATTINIPDTVGYTMPFEFAGIISGLYERVPNIDKAIISVHTHDDLGLAVGNSLAAVHAGARQVEGAMNGIGERAGNCSLEEVIMAIKVRKDILNVHTAINHQEIWRTSQLVSQICNMPIPANKAIVGSGAFAHSSGIHQDGVLKNRENYEIMTPESIGLNQIQLNLTSRSGRAAVKHRMDEMGYKESEYNLDNLYDAFLKLADKKGQVFDYDLEALAFIGKQQEEPEHFRLDYFSVQSGSNDIATAAVKLACGEEVKAEAANGNGPVDAVYQAINRITDYNVELVKYSLTAKGHGKDALGQVDIVANYNGRRFHGVGLATDIVESSAKAMVHVLNNIWRAAEVEKELQRKAQHNENNKETV</sequence>
<evidence type="ECO:0000255" key="1">
    <source>
        <dbReference type="HAMAP-Rule" id="MF_01025"/>
    </source>
</evidence>